<sequence>MADSKEIKRVLLSPLFDNNPIALQILGVCSALAVTTKLETALVMTLAVTLVTAFSSFFISLIRNHIPNSVRIIVQMVIIASLVIVVDQVLRAYAYEISKQLSVFVGLIITNCIVMGRAEAYAMKSPPIESFMDGIGNGLGYGVILVLVGFVRELVGSGKLFGVTVLETVQNGGWYLPNGLFLLAPSAFFIIGLLIWGLRTLKPAQIEKE</sequence>
<proteinExistence type="inferred from homology"/>
<name>NQRD_YERPG</name>
<organism>
    <name type="scientific">Yersinia pestis bv. Antiqua (strain Angola)</name>
    <dbReference type="NCBI Taxonomy" id="349746"/>
    <lineage>
        <taxon>Bacteria</taxon>
        <taxon>Pseudomonadati</taxon>
        <taxon>Pseudomonadota</taxon>
        <taxon>Gammaproteobacteria</taxon>
        <taxon>Enterobacterales</taxon>
        <taxon>Yersiniaceae</taxon>
        <taxon>Yersinia</taxon>
    </lineage>
</organism>
<comment type="function">
    <text evidence="1">NQR complex catalyzes the reduction of ubiquinone-1 to ubiquinol by two successive reactions, coupled with the transport of Na(+) ions from the cytoplasm to the periplasm. NqrA to NqrE are probably involved in the second step, the conversion of ubisemiquinone to ubiquinol.</text>
</comment>
<comment type="catalytic activity">
    <reaction evidence="1">
        <text>a ubiquinone + n Na(+)(in) + NADH + H(+) = a ubiquinol + n Na(+)(out) + NAD(+)</text>
        <dbReference type="Rhea" id="RHEA:47748"/>
        <dbReference type="Rhea" id="RHEA-COMP:9565"/>
        <dbReference type="Rhea" id="RHEA-COMP:9566"/>
        <dbReference type="ChEBI" id="CHEBI:15378"/>
        <dbReference type="ChEBI" id="CHEBI:16389"/>
        <dbReference type="ChEBI" id="CHEBI:17976"/>
        <dbReference type="ChEBI" id="CHEBI:29101"/>
        <dbReference type="ChEBI" id="CHEBI:57540"/>
        <dbReference type="ChEBI" id="CHEBI:57945"/>
        <dbReference type="EC" id="7.2.1.1"/>
    </reaction>
</comment>
<comment type="subunit">
    <text evidence="1">Composed of six subunits; NqrA, NqrB, NqrC, NqrD, NqrE and NqrF.</text>
</comment>
<comment type="subcellular location">
    <subcellularLocation>
        <location evidence="1">Cell inner membrane</location>
        <topology evidence="1">Multi-pass membrane protein</topology>
    </subcellularLocation>
</comment>
<comment type="similarity">
    <text evidence="1">Belongs to the NqrDE/RnfAE family.</text>
</comment>
<gene>
    <name evidence="1" type="primary">nqrD</name>
    <name type="ordered locus">YpAngola_A3314</name>
</gene>
<protein>
    <recommendedName>
        <fullName evidence="1">Na(+)-translocating NADH-quinone reductase subunit D</fullName>
        <shortName evidence="1">Na(+)-NQR subunit D</shortName>
        <shortName evidence="1">Na(+)-translocating NQR subunit D</shortName>
        <ecNumber evidence="1">7.2.1.1</ecNumber>
    </recommendedName>
    <alternativeName>
        <fullName evidence="1">NQR complex subunit D</fullName>
    </alternativeName>
    <alternativeName>
        <fullName evidence="1">NQR-1 subunit D</fullName>
    </alternativeName>
</protein>
<reference key="1">
    <citation type="journal article" date="2010" name="J. Bacteriol.">
        <title>Genome sequence of the deep-rooted Yersinia pestis strain Angola reveals new insights into the evolution and pangenome of the plague bacterium.</title>
        <authorList>
            <person name="Eppinger M."/>
            <person name="Worsham P.L."/>
            <person name="Nikolich M.P."/>
            <person name="Riley D.R."/>
            <person name="Sebastian Y."/>
            <person name="Mou S."/>
            <person name="Achtman M."/>
            <person name="Lindler L.E."/>
            <person name="Ravel J."/>
        </authorList>
    </citation>
    <scope>NUCLEOTIDE SEQUENCE [LARGE SCALE GENOMIC DNA]</scope>
    <source>
        <strain>Angola</strain>
    </source>
</reference>
<keyword id="KW-0997">Cell inner membrane</keyword>
<keyword id="KW-1003">Cell membrane</keyword>
<keyword id="KW-0406">Ion transport</keyword>
<keyword id="KW-0472">Membrane</keyword>
<keyword id="KW-0520">NAD</keyword>
<keyword id="KW-0915">Sodium</keyword>
<keyword id="KW-0739">Sodium transport</keyword>
<keyword id="KW-1278">Translocase</keyword>
<keyword id="KW-0812">Transmembrane</keyword>
<keyword id="KW-1133">Transmembrane helix</keyword>
<keyword id="KW-0813">Transport</keyword>
<keyword id="KW-0830">Ubiquinone</keyword>
<dbReference type="EC" id="7.2.1.1" evidence="1"/>
<dbReference type="EMBL" id="CP000901">
    <property type="protein sequence ID" value="ABX88251.1"/>
    <property type="molecule type" value="Genomic_DNA"/>
</dbReference>
<dbReference type="RefSeq" id="WP_002208714.1">
    <property type="nucleotide sequence ID" value="NZ_CP009935.1"/>
</dbReference>
<dbReference type="SMR" id="A9R2Y3"/>
<dbReference type="KEGG" id="ypg:YpAngola_A3314"/>
<dbReference type="PATRIC" id="fig|349746.12.peg.12"/>
<dbReference type="GO" id="GO:0005886">
    <property type="term" value="C:plasma membrane"/>
    <property type="evidence" value="ECO:0007669"/>
    <property type="project" value="UniProtKB-SubCell"/>
</dbReference>
<dbReference type="GO" id="GO:0016655">
    <property type="term" value="F:oxidoreductase activity, acting on NAD(P)H, quinone or similar compound as acceptor"/>
    <property type="evidence" value="ECO:0007669"/>
    <property type="project" value="UniProtKB-UniRule"/>
</dbReference>
<dbReference type="GO" id="GO:0006814">
    <property type="term" value="P:sodium ion transport"/>
    <property type="evidence" value="ECO:0007669"/>
    <property type="project" value="UniProtKB-UniRule"/>
</dbReference>
<dbReference type="HAMAP" id="MF_00428">
    <property type="entry name" value="NqrD"/>
    <property type="match status" value="1"/>
</dbReference>
<dbReference type="InterPro" id="IPR011292">
    <property type="entry name" value="NqrD"/>
</dbReference>
<dbReference type="InterPro" id="IPR003667">
    <property type="entry name" value="NqrDE/RnfAE"/>
</dbReference>
<dbReference type="NCBIfam" id="TIGR01939">
    <property type="entry name" value="nqrD"/>
    <property type="match status" value="1"/>
</dbReference>
<dbReference type="NCBIfam" id="NF006777">
    <property type="entry name" value="PRK09292.1"/>
    <property type="match status" value="1"/>
</dbReference>
<dbReference type="NCBIfam" id="NF009070">
    <property type="entry name" value="PRK12405.1"/>
    <property type="match status" value="1"/>
</dbReference>
<dbReference type="PANTHER" id="PTHR30586">
    <property type="entry name" value="ELECTRON TRANSPORT COMPLEX PROTEIN RNFE"/>
    <property type="match status" value="1"/>
</dbReference>
<dbReference type="PANTHER" id="PTHR30586:SF1">
    <property type="entry name" value="NA(+)-TRANSLOCATING NADH-QUINONE REDUCTASE SUBUNIT D"/>
    <property type="match status" value="1"/>
</dbReference>
<dbReference type="Pfam" id="PF02508">
    <property type="entry name" value="Rnf-Nqr"/>
    <property type="match status" value="1"/>
</dbReference>
<dbReference type="PIRSF" id="PIRSF006102">
    <property type="entry name" value="NQR_DE"/>
    <property type="match status" value="1"/>
</dbReference>
<evidence type="ECO:0000255" key="1">
    <source>
        <dbReference type="HAMAP-Rule" id="MF_00428"/>
    </source>
</evidence>
<feature type="chain" id="PRO_1000191692" description="Na(+)-translocating NADH-quinone reductase subunit D">
    <location>
        <begin position="1"/>
        <end position="209"/>
    </location>
</feature>
<feature type="transmembrane region" description="Helical" evidence="1">
    <location>
        <begin position="42"/>
        <end position="62"/>
    </location>
</feature>
<feature type="transmembrane region" description="Helical" evidence="1">
    <location>
        <begin position="66"/>
        <end position="86"/>
    </location>
</feature>
<feature type="transmembrane region" description="Helical" evidence="1">
    <location>
        <begin position="103"/>
        <end position="123"/>
    </location>
</feature>
<feature type="transmembrane region" description="Helical" evidence="1">
    <location>
        <begin position="131"/>
        <end position="151"/>
    </location>
</feature>
<feature type="transmembrane region" description="Helical" evidence="1">
    <location>
        <begin position="178"/>
        <end position="198"/>
    </location>
</feature>
<accession>A9R2Y3</accession>